<organism>
    <name type="scientific">Acinetobacter baumannii (strain AYE)</name>
    <dbReference type="NCBI Taxonomy" id="509173"/>
    <lineage>
        <taxon>Bacteria</taxon>
        <taxon>Pseudomonadati</taxon>
        <taxon>Pseudomonadota</taxon>
        <taxon>Gammaproteobacteria</taxon>
        <taxon>Moraxellales</taxon>
        <taxon>Moraxellaceae</taxon>
        <taxon>Acinetobacter</taxon>
        <taxon>Acinetobacter calcoaceticus/baumannii complex</taxon>
    </lineage>
</organism>
<reference key="1">
    <citation type="journal article" date="2008" name="PLoS ONE">
        <title>Comparative analysis of Acinetobacters: three genomes for three lifestyles.</title>
        <authorList>
            <person name="Vallenet D."/>
            <person name="Nordmann P."/>
            <person name="Barbe V."/>
            <person name="Poirel L."/>
            <person name="Mangenot S."/>
            <person name="Bataille E."/>
            <person name="Dossat C."/>
            <person name="Gas S."/>
            <person name="Kreimeyer A."/>
            <person name="Lenoble P."/>
            <person name="Oztas S."/>
            <person name="Poulain J."/>
            <person name="Segurens B."/>
            <person name="Robert C."/>
            <person name="Abergel C."/>
            <person name="Claverie J.-M."/>
            <person name="Raoult D."/>
            <person name="Medigue C."/>
            <person name="Weissenbach J."/>
            <person name="Cruveiller S."/>
        </authorList>
    </citation>
    <scope>NUCLEOTIDE SEQUENCE [LARGE SCALE GENOMIC DNA]</scope>
    <source>
        <strain>AYE</strain>
    </source>
</reference>
<protein>
    <recommendedName>
        <fullName evidence="1">Homoserine O-succinyltransferase</fullName>
        <shortName evidence="1">HST</shortName>
        <ecNumber evidence="1">2.3.1.46</ecNumber>
    </recommendedName>
    <alternativeName>
        <fullName evidence="1">Homoserine transsuccinylase</fullName>
        <shortName evidence="1">HTS</shortName>
    </alternativeName>
</protein>
<comment type="function">
    <text evidence="1">Transfers a succinyl group from succinyl-CoA to L-homoserine, forming succinyl-L-homoserine.</text>
</comment>
<comment type="catalytic activity">
    <reaction evidence="1">
        <text>L-homoserine + succinyl-CoA = O-succinyl-L-homoserine + CoA</text>
        <dbReference type="Rhea" id="RHEA:22008"/>
        <dbReference type="ChEBI" id="CHEBI:57287"/>
        <dbReference type="ChEBI" id="CHEBI:57292"/>
        <dbReference type="ChEBI" id="CHEBI:57476"/>
        <dbReference type="ChEBI" id="CHEBI:57661"/>
        <dbReference type="EC" id="2.3.1.46"/>
    </reaction>
</comment>
<comment type="pathway">
    <text evidence="1">Amino-acid biosynthesis; L-methionine biosynthesis via de novo pathway; O-succinyl-L-homoserine from L-homoserine: step 1/1.</text>
</comment>
<comment type="subunit">
    <text evidence="1">Homodimer.</text>
</comment>
<comment type="subcellular location">
    <subcellularLocation>
        <location evidence="1">Cytoplasm</location>
    </subcellularLocation>
</comment>
<comment type="similarity">
    <text evidence="1">Belongs to the AB hydrolase superfamily. MetX family.</text>
</comment>
<sequence>MSFPADSVGLVTPQKFQFEEPLHLECGRVLPRFELMVETYGTLNADKSNAILICHALSGHHHAAGYHHEDDKKAGWWDSCIGPGKAIDTNKFFVVALNNIGGCSGSTGPTSPNPENDNRPYGPDFPLVTVRDWVKTQAMLSDRLGISVWYAVVGGSLGGMQALQWSVDYPDRLQKCVVIASAPKLSAQNIAFNEVARQSILSDPDFHHGRYLEKDSYPKRGLILARMVGHITYLSEEAMKQKFGRDLKSGKFMYGFDVEFQVESYLRYQGEQFSRNFDANTYLIMTKALDYFDPSREYGHSLTEAMSKTKCQFLIVSFTTDWRFAPSRSQEIVDALITNQKPVSYLDIDAEQGHDSFLFPIPLYVKTLRAFLGGEEHLKSTSLEAS</sequence>
<feature type="chain" id="PRO_1000115208" description="Homoserine O-succinyltransferase">
    <location>
        <begin position="1"/>
        <end position="386"/>
    </location>
</feature>
<feature type="domain" description="AB hydrolase-1" evidence="1">
    <location>
        <begin position="49"/>
        <end position="358"/>
    </location>
</feature>
<feature type="active site" description="Nucleophile" evidence="1">
    <location>
        <position position="156"/>
    </location>
</feature>
<feature type="active site" evidence="1">
    <location>
        <position position="321"/>
    </location>
</feature>
<feature type="active site" evidence="1">
    <location>
        <position position="354"/>
    </location>
</feature>
<feature type="binding site" evidence="1">
    <location>
        <position position="226"/>
    </location>
    <ligand>
        <name>substrate</name>
    </ligand>
</feature>
<feature type="binding site" evidence="1">
    <location>
        <position position="355"/>
    </location>
    <ligand>
        <name>substrate</name>
    </ligand>
</feature>
<feature type="site" description="Important for acyl-CoA specificity" evidence="1">
    <location>
        <position position="323"/>
    </location>
</feature>
<accession>B0V4S0</accession>
<name>METXS_ACIBY</name>
<proteinExistence type="inferred from homology"/>
<keyword id="KW-0012">Acyltransferase</keyword>
<keyword id="KW-0028">Amino-acid biosynthesis</keyword>
<keyword id="KW-0963">Cytoplasm</keyword>
<keyword id="KW-0486">Methionine biosynthesis</keyword>
<keyword id="KW-0808">Transferase</keyword>
<dbReference type="EC" id="2.3.1.46" evidence="1"/>
<dbReference type="EMBL" id="CU459141">
    <property type="protein sequence ID" value="CAM88093.1"/>
    <property type="molecule type" value="Genomic_DNA"/>
</dbReference>
<dbReference type="SMR" id="B0V4S0"/>
<dbReference type="ESTHER" id="acib3-metx">
    <property type="family name" value="Homoserine_transacetylase"/>
</dbReference>
<dbReference type="EnsemblBacteria" id="CAM88093">
    <property type="protein sequence ID" value="CAM88093"/>
    <property type="gene ID" value="ABAYE3293"/>
</dbReference>
<dbReference type="KEGG" id="aby:ABAYE3293"/>
<dbReference type="HOGENOM" id="CLU_028760_1_2_6"/>
<dbReference type="UniPathway" id="UPA00051">
    <property type="reaction ID" value="UER00075"/>
</dbReference>
<dbReference type="GO" id="GO:0005737">
    <property type="term" value="C:cytoplasm"/>
    <property type="evidence" value="ECO:0007669"/>
    <property type="project" value="UniProtKB-SubCell"/>
</dbReference>
<dbReference type="GO" id="GO:0004414">
    <property type="term" value="F:homoserine O-acetyltransferase activity"/>
    <property type="evidence" value="ECO:0007669"/>
    <property type="project" value="TreeGrafter"/>
</dbReference>
<dbReference type="GO" id="GO:0008899">
    <property type="term" value="F:homoserine O-succinyltransferase activity"/>
    <property type="evidence" value="ECO:0007669"/>
    <property type="project" value="UniProtKB-UniRule"/>
</dbReference>
<dbReference type="GO" id="GO:0009092">
    <property type="term" value="P:homoserine metabolic process"/>
    <property type="evidence" value="ECO:0007669"/>
    <property type="project" value="TreeGrafter"/>
</dbReference>
<dbReference type="GO" id="GO:0009086">
    <property type="term" value="P:methionine biosynthetic process"/>
    <property type="evidence" value="ECO:0007669"/>
    <property type="project" value="UniProtKB-UniRule"/>
</dbReference>
<dbReference type="FunFam" id="1.10.1740.110:FF:000001">
    <property type="entry name" value="Homoserine O-acetyltransferase"/>
    <property type="match status" value="1"/>
</dbReference>
<dbReference type="Gene3D" id="1.10.1740.110">
    <property type="match status" value="1"/>
</dbReference>
<dbReference type="Gene3D" id="3.40.50.1820">
    <property type="entry name" value="alpha/beta hydrolase"/>
    <property type="match status" value="1"/>
</dbReference>
<dbReference type="HAMAP" id="MF_00296">
    <property type="entry name" value="MetX_acyltransf"/>
    <property type="match status" value="1"/>
</dbReference>
<dbReference type="InterPro" id="IPR000073">
    <property type="entry name" value="AB_hydrolase_1"/>
</dbReference>
<dbReference type="InterPro" id="IPR029058">
    <property type="entry name" value="AB_hydrolase_fold"/>
</dbReference>
<dbReference type="InterPro" id="IPR008220">
    <property type="entry name" value="HAT_MetX-like"/>
</dbReference>
<dbReference type="NCBIfam" id="TIGR01392">
    <property type="entry name" value="homoserO_Ac_trn"/>
    <property type="match status" value="1"/>
</dbReference>
<dbReference type="NCBIfam" id="NF001209">
    <property type="entry name" value="PRK00175.1"/>
    <property type="match status" value="1"/>
</dbReference>
<dbReference type="PANTHER" id="PTHR32268">
    <property type="entry name" value="HOMOSERINE O-ACETYLTRANSFERASE"/>
    <property type="match status" value="1"/>
</dbReference>
<dbReference type="PANTHER" id="PTHR32268:SF11">
    <property type="entry name" value="HOMOSERINE O-ACETYLTRANSFERASE"/>
    <property type="match status" value="1"/>
</dbReference>
<dbReference type="Pfam" id="PF00561">
    <property type="entry name" value="Abhydrolase_1"/>
    <property type="match status" value="1"/>
</dbReference>
<dbReference type="PIRSF" id="PIRSF000443">
    <property type="entry name" value="Homoser_Ac_trans"/>
    <property type="match status" value="1"/>
</dbReference>
<dbReference type="SUPFAM" id="SSF53474">
    <property type="entry name" value="alpha/beta-Hydrolases"/>
    <property type="match status" value="1"/>
</dbReference>
<evidence type="ECO:0000255" key="1">
    <source>
        <dbReference type="HAMAP-Rule" id="MF_00296"/>
    </source>
</evidence>
<gene>
    <name evidence="1" type="primary">metXS</name>
    <name type="ordered locus">ABAYE3293</name>
</gene>